<organism>
    <name type="scientific">Sendai virus (strain Fushimi)</name>
    <name type="common">SeV</name>
    <dbReference type="NCBI Taxonomy" id="11195"/>
    <lineage>
        <taxon>Viruses</taxon>
        <taxon>Riboviria</taxon>
        <taxon>Orthornavirae</taxon>
        <taxon>Negarnaviricota</taxon>
        <taxon>Haploviricotina</taxon>
        <taxon>Monjiviricetes</taxon>
        <taxon>Mononegavirales</taxon>
        <taxon>Paramyxoviridae</taxon>
        <taxon>Feraresvirinae</taxon>
        <taxon>Respirovirus</taxon>
        <taxon>Respirovirus muris</taxon>
    </lineage>
</organism>
<feature type="chain" id="PRO_0000142637" description="Hemagglutinin-neuraminidase">
    <location>
        <begin position="1"/>
        <end position="575"/>
    </location>
</feature>
<feature type="topological domain" description="Intravirion" evidence="1">
    <location>
        <begin position="1"/>
        <end position="37"/>
    </location>
</feature>
<feature type="transmembrane region" description="Helical" evidence="1">
    <location>
        <begin position="38"/>
        <end position="58"/>
    </location>
</feature>
<feature type="topological domain" description="Virion surface" evidence="1">
    <location>
        <begin position="59"/>
        <end position="575"/>
    </location>
</feature>
<feature type="region of interest" description="Disordered" evidence="6">
    <location>
        <begin position="1"/>
        <end position="24"/>
    </location>
</feature>
<feature type="region of interest" description="Incorporation in virion" evidence="1">
    <location>
        <begin position="10"/>
        <end position="14"/>
    </location>
</feature>
<feature type="region of interest" description="Involved in interaction with F protein" evidence="1">
    <location>
        <begin position="59"/>
        <end position="140"/>
    </location>
</feature>
<feature type="region of interest" description="Involved in neuraminidase activity" evidence="3">
    <location>
        <begin position="254"/>
        <end position="259"/>
    </location>
</feature>
<feature type="compositionally biased region" description="Basic and acidic residues" evidence="6">
    <location>
        <begin position="1"/>
        <end position="10"/>
    </location>
</feature>
<feature type="compositionally biased region" description="Polar residues" evidence="6">
    <location>
        <begin position="11"/>
        <end position="23"/>
    </location>
</feature>
<feature type="glycosylation site" description="N-linked (GlcNAc...) asparagine; by host" evidence="1">
    <location>
        <position position="77"/>
    </location>
</feature>
<feature type="glycosylation site" description="N-linked (GlcNAc...) asparagine; by host" evidence="1">
    <location>
        <position position="499"/>
    </location>
</feature>
<feature type="glycosylation site" description="N-linked (GlcNAc...) asparagine; by host" evidence="1">
    <location>
        <position position="511"/>
    </location>
</feature>
<feature type="disulfide bond" description="Interchain" evidence="5">
    <location>
        <position position="129"/>
    </location>
</feature>
<feature type="disulfide bond" evidence="4">
    <location>
        <begin position="192"/>
        <end position="216"/>
    </location>
</feature>
<feature type="disulfide bond" evidence="4">
    <location>
        <begin position="258"/>
        <end position="271"/>
    </location>
</feature>
<feature type="disulfide bond" evidence="4">
    <location>
        <begin position="357"/>
        <end position="469"/>
    </location>
</feature>
<feature type="disulfide bond" evidence="4">
    <location>
        <begin position="463"/>
        <end position="473"/>
    </location>
</feature>
<feature type="disulfide bond" evidence="4">
    <location>
        <begin position="535"/>
        <end position="544"/>
    </location>
</feature>
<feature type="sequence variant">
    <original>S</original>
    <variation>T</variation>
    <location>
        <position position="86"/>
    </location>
</feature>
<feature type="sequence variant">
    <original>Q</original>
    <variation>K</variation>
    <location>
        <position position="525"/>
    </location>
</feature>
<comment type="function">
    <text evidence="1">Attaches the virus to sialic acid-containing cell receptors and thereby initiating infection. Binding of HN protein to the receptor induces a conformational change that allows the F protein to trigger virion/cell membranes fusion (By similarity).</text>
</comment>
<comment type="function">
    <text evidence="1">Neuraminidase activity ensures the efficient spread of the virus by dissociating the mature virions from the neuraminic acid containing glycoproteins.</text>
</comment>
<comment type="catalytic activity">
    <reaction evidence="4">
        <text>Hydrolysis of alpha-(2-&gt;3)-, alpha-(2-&gt;6)-, alpha-(2-&gt;8)- glycosidic linkages of terminal sialic acid residues in oligosaccharides, glycoproteins, glycolipids, colominic acid and synthetic substrates.</text>
        <dbReference type="EC" id="3.2.1.18"/>
    </reaction>
</comment>
<comment type="subunit">
    <text evidence="2 4">Homotetramer; composed of disulfide-linked homodimers (By similarity). Interacts with F protein trimer (By similarity).</text>
</comment>
<comment type="subcellular location">
    <subcellularLocation>
        <location evidence="7">Virion membrane</location>
        <topology evidence="7">Single-pass type II membrane protein</topology>
    </subcellularLocation>
    <subcellularLocation>
        <location evidence="7">Host cell membrane</location>
        <topology evidence="7">Single-pass type II membrane protein</topology>
    </subcellularLocation>
</comment>
<comment type="domain">
    <text evidence="4">The C-terminus (head domain) is involved in binding the cellular receptor.</text>
</comment>
<comment type="PTM">
    <text evidence="1">N-glycosylated; glycans consist of a mixture of high mannose-type oligosaccharides and of complex-type oligosaccharides.</text>
</comment>
<comment type="similarity">
    <text evidence="7">Belongs to the paramyxoviruses hemagglutinin-neuraminidase family.</text>
</comment>
<sequence>MDGDRGKRDSYWSTSPSGSTTKLASGWERSSKVDTWLLILSFTQWALSIATVIICIIISARQGYSMKEYSMTVEALNMSSREVKESLTSLIRQEVIARAVNIQSSVQTGIPVLLNKNSRDVIQMIDKSCSRQELTQLCESTIAVHHAEGIAPLEPHSFWRCPVGEPYLSSDPKISLLPGPSLLSGSTTISGCVRLPSLSIGEAIYAYSSNLITQGCADIGKSYQVLQLGYISLNSDMFPDLNPVVSHTYDINDNRKSCSVVATGTRGYQLCSMPTVDERTDYSSDGIEDLVLDVLDLKGSTKSHRYRNSEVDLDHPFSALYPSVGNGIATEGSLIFLGYGGLTTPLQGDTKCRTQGCQQVSQDTCNEALKITWLGGKQVVSVIIQVNDYLSERPKIRVTTIPITQNYLGAEGRLLKLGDRVYIYTRSSGWHSQLQIGVLDVSHPLTINWTPHEALSRPGNEECNWYNTCPKECISGVYTDAYPLSPDAANVATVTLYANTSRVNPTIMYSNTTNIINMLRIKDVQLEAAYTTTSCITHFGKGYCFHIIEINQKSLNTLQPMLFKTSIPKLCKAES</sequence>
<accession>P19758</accession>
<accession>Q88413</accession>
<name>HN_SENDF</name>
<gene>
    <name type="primary">HN</name>
</gene>
<proteinExistence type="evidence at protein level"/>
<reference key="1">
    <citation type="journal article" date="1990" name="Nucleic Acids Res.">
        <title>Cloning and sequencing of the HN gene of Sendai virus (strain Fushimi).</title>
        <authorList>
            <person name="Neubert W.J."/>
            <person name="Willenbrink W."/>
        </authorList>
    </citation>
    <scope>NUCLEOTIDE SEQUENCE [GENOMIC RNA]</scope>
</reference>
<reference key="2">
    <citation type="journal article" date="1995" name="Virus Res.">
        <title>Role of basic residues in the proteolytic activation of Sendai virus fusion glycoprotein.</title>
        <authorList>
            <person name="Heminaway B.R."/>
            <person name="Yang Y."/>
            <person name="Tanaka Y."/>
            <person name="Panin M."/>
            <person name="Huang Y.T."/>
            <person name="Galinski M.S."/>
        </authorList>
    </citation>
    <scope>NUCLEOTIDE SEQUENCE [GENOMIC RNA]</scope>
</reference>
<reference key="3">
    <citation type="journal article" date="1999" name="J. Biochem.">
        <title>Kinetics of interactions of sendai virus envelope glycoproteins, F and HN, with endoplasmic reticulum-resident molecular chaperones, BiP, calnexin, and calreticulin.</title>
        <authorList>
            <person name="Tomita Y."/>
            <person name="Yamashita T."/>
            <person name="Sato H."/>
            <person name="Taira H."/>
        </authorList>
    </citation>
    <scope>INTERACTION WITH CHAPERONES</scope>
</reference>
<organismHost>
    <name type="scientific">Cavia cutleri</name>
    <name type="common">Guinea pig</name>
    <dbReference type="NCBI Taxonomy" id="10144"/>
</organismHost>
<organismHost>
    <name type="scientific">Cricetidae sp.</name>
    <name type="common">Hamster</name>
    <dbReference type="NCBI Taxonomy" id="36483"/>
</organismHost>
<organismHost>
    <name type="scientific">Mus musculus</name>
    <name type="common">Mouse</name>
    <dbReference type="NCBI Taxonomy" id="10090"/>
</organismHost>
<organismHost>
    <name type="scientific">Rattus norvegicus</name>
    <name type="common">Rat</name>
    <dbReference type="NCBI Taxonomy" id="10116"/>
</organismHost>
<protein>
    <recommendedName>
        <fullName>Hemagglutinin-neuraminidase</fullName>
        <shortName>HN protein</shortName>
        <ecNumber evidence="4">3.2.1.18</ecNumber>
    </recommendedName>
</protein>
<dbReference type="EC" id="3.2.1.18" evidence="4"/>
<dbReference type="EMBL" id="X56131">
    <property type="protein sequence ID" value="CAA39596.1"/>
    <property type="molecule type" value="Genomic_RNA"/>
</dbReference>
<dbReference type="EMBL" id="U06433">
    <property type="protein sequence ID" value="AAC54272.1"/>
    <property type="molecule type" value="Genomic_RNA"/>
</dbReference>
<dbReference type="PIR" id="S12135">
    <property type="entry name" value="S12135"/>
</dbReference>
<dbReference type="SMR" id="P19758"/>
<dbReference type="CAZy" id="GH83">
    <property type="family name" value="Glycoside Hydrolase Family 83"/>
</dbReference>
<dbReference type="GlyCosmos" id="P19758">
    <property type="glycosylation" value="3 sites, No reported glycans"/>
</dbReference>
<dbReference type="Proteomes" id="UP000006825">
    <property type="component" value="Genome"/>
</dbReference>
<dbReference type="GO" id="GO:0020002">
    <property type="term" value="C:host cell plasma membrane"/>
    <property type="evidence" value="ECO:0007669"/>
    <property type="project" value="UniProtKB-SubCell"/>
</dbReference>
<dbReference type="GO" id="GO:0016020">
    <property type="term" value="C:membrane"/>
    <property type="evidence" value="ECO:0007669"/>
    <property type="project" value="UniProtKB-KW"/>
</dbReference>
<dbReference type="GO" id="GO:0019031">
    <property type="term" value="C:viral envelope"/>
    <property type="evidence" value="ECO:0007669"/>
    <property type="project" value="UniProtKB-KW"/>
</dbReference>
<dbReference type="GO" id="GO:0055036">
    <property type="term" value="C:virion membrane"/>
    <property type="evidence" value="ECO:0007669"/>
    <property type="project" value="UniProtKB-SubCell"/>
</dbReference>
<dbReference type="GO" id="GO:0004308">
    <property type="term" value="F:exo-alpha-sialidase activity"/>
    <property type="evidence" value="ECO:0007669"/>
    <property type="project" value="UniProtKB-EC"/>
</dbReference>
<dbReference type="GO" id="GO:0046789">
    <property type="term" value="F:host cell surface receptor binding"/>
    <property type="evidence" value="ECO:0007669"/>
    <property type="project" value="InterPro"/>
</dbReference>
<dbReference type="GO" id="GO:0046718">
    <property type="term" value="P:symbiont entry into host cell"/>
    <property type="evidence" value="ECO:0007669"/>
    <property type="project" value="UniProtKB-KW"/>
</dbReference>
<dbReference type="GO" id="GO:0019062">
    <property type="term" value="P:virion attachment to host cell"/>
    <property type="evidence" value="ECO:0007669"/>
    <property type="project" value="UniProtKB-KW"/>
</dbReference>
<dbReference type="CDD" id="cd15469">
    <property type="entry name" value="HN"/>
    <property type="match status" value="1"/>
</dbReference>
<dbReference type="FunFam" id="2.120.10.10:FF:000015">
    <property type="entry name" value="Hemagglutinin-neuraminidase"/>
    <property type="match status" value="1"/>
</dbReference>
<dbReference type="Gene3D" id="2.120.10.10">
    <property type="match status" value="1"/>
</dbReference>
<dbReference type="InterPro" id="IPR016285">
    <property type="entry name" value="Hemagglutn-neuramid"/>
</dbReference>
<dbReference type="InterPro" id="IPR000665">
    <property type="entry name" value="Hemagglutn/HN"/>
</dbReference>
<dbReference type="InterPro" id="IPR036278">
    <property type="entry name" value="Sialidase_sf"/>
</dbReference>
<dbReference type="Pfam" id="PF00423">
    <property type="entry name" value="HN"/>
    <property type="match status" value="1"/>
</dbReference>
<dbReference type="PIRSF" id="PIRSF001072">
    <property type="entry name" value="Hemagglut-neuramid_paramyxoV"/>
    <property type="match status" value="1"/>
</dbReference>
<dbReference type="SUPFAM" id="SSF50939">
    <property type="entry name" value="Sialidases"/>
    <property type="match status" value="1"/>
</dbReference>
<evidence type="ECO:0000250" key="1"/>
<evidence type="ECO:0000250" key="2">
    <source>
        <dbReference type="UniProtKB" id="P04853"/>
    </source>
</evidence>
<evidence type="ECO:0000250" key="3">
    <source>
        <dbReference type="UniProtKB" id="Q91UL0"/>
    </source>
</evidence>
<evidence type="ECO:0000250" key="4">
    <source>
        <dbReference type="UniProtKB" id="Q9WAF5"/>
    </source>
</evidence>
<evidence type="ECO:0000255" key="5"/>
<evidence type="ECO:0000256" key="6">
    <source>
        <dbReference type="SAM" id="MobiDB-lite"/>
    </source>
</evidence>
<evidence type="ECO:0000305" key="7"/>
<keyword id="KW-1015">Disulfide bond</keyword>
<keyword id="KW-0325">Glycoprotein</keyword>
<keyword id="KW-0348">Hemagglutinin</keyword>
<keyword id="KW-1032">Host cell membrane</keyword>
<keyword id="KW-1043">Host membrane</keyword>
<keyword id="KW-0945">Host-virus interaction</keyword>
<keyword id="KW-0378">Hydrolase</keyword>
<keyword id="KW-0472">Membrane</keyword>
<keyword id="KW-0735">Signal-anchor</keyword>
<keyword id="KW-0812">Transmembrane</keyword>
<keyword id="KW-1133">Transmembrane helix</keyword>
<keyword id="KW-1161">Viral attachment to host cell</keyword>
<keyword id="KW-0261">Viral envelope protein</keyword>
<keyword id="KW-0946">Virion</keyword>
<keyword id="KW-1160">Virus entry into host cell</keyword>